<sequence>MSDVIRLLPDSIANQIAAGEVIQRPASVVKELLENALDAGASIIRLDVREAGRELIRVTDNGKGMSQSDARMAFERHATSKIASFQDLFSLRTMGFRGEALASIAAVAQVELLTRRAEDELGTRLTINGSEVGEVATVTSPLGCILCVKNLFYNVPARRKFLKSNETEFRHILTEYERVALVNPQVAFSIYHSGELVQDLPPSPLKKRILDVFGKRMEKDLIPIGMKSPITNISGFVGRPDGARKRGALQYFFVNGRFMRHPYFHKAVMAAYEAIIPQGTMPNYFLYFDLEPSQIDVNIHPTKTEIKFSDEQAIFKLIGVVIREALSSSNAVPAIDFDRKELIDIPAYQGPGKNVVRPPVDLDPSYNPFKETGLTEPIRSSRRQSPDMGWNELFKQFEAKRDAEKMAEPPIRSEELFASTDFTPSAVSATPSTDMLCYVHRGRYLVTTLSRGLALVDFHRAHKRILYDRFMADESRRHIEQQQLLFPELLEFNPSDASAVKAAVDELQSVGFDLSPLGVSSYSLLAAPVQIIDCAADVVRDVIHTTLEDGRSSHEQMLELIATQIAEYQAIPCGKTPTAEEASDLLAELFASNDSTYTPDGKLIVSIIEEADIARRFE</sequence>
<keyword id="KW-0227">DNA damage</keyword>
<keyword id="KW-0234">DNA repair</keyword>
<keyword id="KW-1185">Reference proteome</keyword>
<organism>
    <name type="scientific">Porphyromonas gingivalis (strain ATCC BAA-308 / W83)</name>
    <dbReference type="NCBI Taxonomy" id="242619"/>
    <lineage>
        <taxon>Bacteria</taxon>
        <taxon>Pseudomonadati</taxon>
        <taxon>Bacteroidota</taxon>
        <taxon>Bacteroidia</taxon>
        <taxon>Bacteroidales</taxon>
        <taxon>Porphyromonadaceae</taxon>
        <taxon>Porphyromonas</taxon>
    </lineage>
</organism>
<name>MUTL_PORGI</name>
<comment type="function">
    <text evidence="1">This protein is involved in the repair of mismatches in DNA. It is required for dam-dependent methyl-directed DNA mismatch repair. May act as a 'molecular matchmaker', a protein that promotes the formation of a stable complex between two or more DNA-binding proteins in an ATP-dependent manner without itself being part of a final effector complex.</text>
</comment>
<comment type="similarity">
    <text evidence="1">Belongs to the DNA mismatch repair MutL/HexB family.</text>
</comment>
<accession>Q7MX15</accession>
<reference key="1">
    <citation type="journal article" date="2003" name="J. Bacteriol.">
        <title>Complete genome sequence of the oral pathogenic bacterium Porphyromonas gingivalis strain W83.</title>
        <authorList>
            <person name="Nelson K.E."/>
            <person name="Fleischmann R.D."/>
            <person name="DeBoy R.T."/>
            <person name="Paulsen I.T."/>
            <person name="Fouts D.E."/>
            <person name="Eisen J.A."/>
            <person name="Daugherty S.C."/>
            <person name="Dodson R.J."/>
            <person name="Durkin A.S."/>
            <person name="Gwinn M.L."/>
            <person name="Haft D.H."/>
            <person name="Kolonay J.F."/>
            <person name="Nelson W.C."/>
            <person name="Mason T.M."/>
            <person name="Tallon L."/>
            <person name="Gray J."/>
            <person name="Granger D."/>
            <person name="Tettelin H."/>
            <person name="Dong H."/>
            <person name="Galvin J.L."/>
            <person name="Duncan M.J."/>
            <person name="Dewhirst F.E."/>
            <person name="Fraser C.M."/>
        </authorList>
    </citation>
    <scope>NUCLEOTIDE SEQUENCE [LARGE SCALE GENOMIC DNA]</scope>
    <source>
        <strain>ATCC BAA-308 / W83</strain>
    </source>
</reference>
<evidence type="ECO:0000255" key="1">
    <source>
        <dbReference type="HAMAP-Rule" id="MF_00149"/>
    </source>
</evidence>
<protein>
    <recommendedName>
        <fullName evidence="1">DNA mismatch repair protein MutL</fullName>
    </recommendedName>
</protein>
<feature type="chain" id="PRO_1000058147" description="DNA mismatch repair protein MutL">
    <location>
        <begin position="1"/>
        <end position="618"/>
    </location>
</feature>
<proteinExistence type="inferred from homology"/>
<gene>
    <name evidence="1" type="primary">mutL</name>
    <name type="ordered locus">PG_0412</name>
</gene>
<dbReference type="EMBL" id="AE015924">
    <property type="protein sequence ID" value="AAQ65613.1"/>
    <property type="molecule type" value="Genomic_DNA"/>
</dbReference>
<dbReference type="RefSeq" id="WP_005873792.1">
    <property type="nucleotide sequence ID" value="NC_002950.2"/>
</dbReference>
<dbReference type="SMR" id="Q7MX15"/>
<dbReference type="STRING" id="242619.PG_0412"/>
<dbReference type="EnsemblBacteria" id="AAQ65613">
    <property type="protein sequence ID" value="AAQ65613"/>
    <property type="gene ID" value="PG_0412"/>
</dbReference>
<dbReference type="KEGG" id="pgi:PG_0412"/>
<dbReference type="PATRIC" id="fig|242619.8.peg.376"/>
<dbReference type="eggNOG" id="COG0323">
    <property type="taxonomic scope" value="Bacteria"/>
</dbReference>
<dbReference type="HOGENOM" id="CLU_004131_4_0_10"/>
<dbReference type="BioCyc" id="PGIN242619:G1G02-384-MONOMER"/>
<dbReference type="Proteomes" id="UP000000588">
    <property type="component" value="Chromosome"/>
</dbReference>
<dbReference type="GO" id="GO:0032300">
    <property type="term" value="C:mismatch repair complex"/>
    <property type="evidence" value="ECO:0007669"/>
    <property type="project" value="InterPro"/>
</dbReference>
<dbReference type="GO" id="GO:0005524">
    <property type="term" value="F:ATP binding"/>
    <property type="evidence" value="ECO:0007669"/>
    <property type="project" value="InterPro"/>
</dbReference>
<dbReference type="GO" id="GO:0016887">
    <property type="term" value="F:ATP hydrolysis activity"/>
    <property type="evidence" value="ECO:0007669"/>
    <property type="project" value="InterPro"/>
</dbReference>
<dbReference type="GO" id="GO:0140664">
    <property type="term" value="F:ATP-dependent DNA damage sensor activity"/>
    <property type="evidence" value="ECO:0007669"/>
    <property type="project" value="InterPro"/>
</dbReference>
<dbReference type="GO" id="GO:0030983">
    <property type="term" value="F:mismatched DNA binding"/>
    <property type="evidence" value="ECO:0007669"/>
    <property type="project" value="InterPro"/>
</dbReference>
<dbReference type="GO" id="GO:0006298">
    <property type="term" value="P:mismatch repair"/>
    <property type="evidence" value="ECO:0007669"/>
    <property type="project" value="UniProtKB-UniRule"/>
</dbReference>
<dbReference type="CDD" id="cd16926">
    <property type="entry name" value="HATPase_MutL-MLH-PMS-like"/>
    <property type="match status" value="1"/>
</dbReference>
<dbReference type="CDD" id="cd00782">
    <property type="entry name" value="MutL_Trans"/>
    <property type="match status" value="1"/>
</dbReference>
<dbReference type="FunFam" id="3.30.565.10:FF:000003">
    <property type="entry name" value="DNA mismatch repair endonuclease MutL"/>
    <property type="match status" value="1"/>
</dbReference>
<dbReference type="Gene3D" id="3.30.230.10">
    <property type="match status" value="1"/>
</dbReference>
<dbReference type="Gene3D" id="3.30.565.10">
    <property type="entry name" value="Histidine kinase-like ATPase, C-terminal domain"/>
    <property type="match status" value="1"/>
</dbReference>
<dbReference type="Gene3D" id="3.30.1540.20">
    <property type="entry name" value="MutL, C-terminal domain, dimerisation subdomain"/>
    <property type="match status" value="1"/>
</dbReference>
<dbReference type="Gene3D" id="3.30.1370.100">
    <property type="entry name" value="MutL, C-terminal domain, regulatory subdomain"/>
    <property type="match status" value="1"/>
</dbReference>
<dbReference type="HAMAP" id="MF_00149">
    <property type="entry name" value="DNA_mis_repair"/>
    <property type="match status" value="1"/>
</dbReference>
<dbReference type="InterPro" id="IPR014762">
    <property type="entry name" value="DNA_mismatch_repair_CS"/>
</dbReference>
<dbReference type="InterPro" id="IPR020667">
    <property type="entry name" value="DNA_mismatch_repair_MutL"/>
</dbReference>
<dbReference type="InterPro" id="IPR013507">
    <property type="entry name" value="DNA_mismatch_S5_2-like"/>
</dbReference>
<dbReference type="InterPro" id="IPR036890">
    <property type="entry name" value="HATPase_C_sf"/>
</dbReference>
<dbReference type="InterPro" id="IPR002099">
    <property type="entry name" value="MutL/Mlh/PMS"/>
</dbReference>
<dbReference type="InterPro" id="IPR038973">
    <property type="entry name" value="MutL/Mlh/Pms-like"/>
</dbReference>
<dbReference type="InterPro" id="IPR014790">
    <property type="entry name" value="MutL_C"/>
</dbReference>
<dbReference type="InterPro" id="IPR042120">
    <property type="entry name" value="MutL_C_dimsub"/>
</dbReference>
<dbReference type="InterPro" id="IPR042121">
    <property type="entry name" value="MutL_C_regsub"/>
</dbReference>
<dbReference type="InterPro" id="IPR037198">
    <property type="entry name" value="MutL_C_sf"/>
</dbReference>
<dbReference type="InterPro" id="IPR020568">
    <property type="entry name" value="Ribosomal_Su5_D2-typ_SF"/>
</dbReference>
<dbReference type="InterPro" id="IPR014721">
    <property type="entry name" value="Ribsml_uS5_D2-typ_fold_subgr"/>
</dbReference>
<dbReference type="NCBIfam" id="TIGR00585">
    <property type="entry name" value="mutl"/>
    <property type="match status" value="1"/>
</dbReference>
<dbReference type="PANTHER" id="PTHR10073">
    <property type="entry name" value="DNA MISMATCH REPAIR PROTEIN MLH, PMS, MUTL"/>
    <property type="match status" value="1"/>
</dbReference>
<dbReference type="PANTHER" id="PTHR10073:SF12">
    <property type="entry name" value="DNA MISMATCH REPAIR PROTEIN MLH1"/>
    <property type="match status" value="1"/>
</dbReference>
<dbReference type="Pfam" id="PF01119">
    <property type="entry name" value="DNA_mis_repair"/>
    <property type="match status" value="1"/>
</dbReference>
<dbReference type="Pfam" id="PF13589">
    <property type="entry name" value="HATPase_c_3"/>
    <property type="match status" value="1"/>
</dbReference>
<dbReference type="Pfam" id="PF08676">
    <property type="entry name" value="MutL_C"/>
    <property type="match status" value="1"/>
</dbReference>
<dbReference type="SMART" id="SM01340">
    <property type="entry name" value="DNA_mis_repair"/>
    <property type="match status" value="1"/>
</dbReference>
<dbReference type="SMART" id="SM00853">
    <property type="entry name" value="MutL_C"/>
    <property type="match status" value="1"/>
</dbReference>
<dbReference type="SUPFAM" id="SSF55874">
    <property type="entry name" value="ATPase domain of HSP90 chaperone/DNA topoisomerase II/histidine kinase"/>
    <property type="match status" value="1"/>
</dbReference>
<dbReference type="SUPFAM" id="SSF118116">
    <property type="entry name" value="DNA mismatch repair protein MutL"/>
    <property type="match status" value="1"/>
</dbReference>
<dbReference type="SUPFAM" id="SSF54211">
    <property type="entry name" value="Ribosomal protein S5 domain 2-like"/>
    <property type="match status" value="1"/>
</dbReference>
<dbReference type="PROSITE" id="PS00058">
    <property type="entry name" value="DNA_MISMATCH_REPAIR_1"/>
    <property type="match status" value="1"/>
</dbReference>